<sequence>MINSPRVCIQVQSVYIEAQSSPDNERYVFAYTVTIRNLGRAPVQLLGRYWLITNGNGRETEVQGEGVVGVQPLIAPGEEYQYTSGAIIETPLGTMQGHYEMIDENGVPFSIDIPVFRLAVPTLIH</sequence>
<reference key="1">
    <citation type="journal article" date="2008" name="J. Bacteriol.">
        <title>The pangenome structure of Escherichia coli: comparative genomic analysis of E. coli commensal and pathogenic isolates.</title>
        <authorList>
            <person name="Rasko D.A."/>
            <person name="Rosovitz M.J."/>
            <person name="Myers G.S.A."/>
            <person name="Mongodin E.F."/>
            <person name="Fricke W.F."/>
            <person name="Gajer P."/>
            <person name="Crabtree J."/>
            <person name="Sebaihia M."/>
            <person name="Thomson N.R."/>
            <person name="Chaudhuri R."/>
            <person name="Henderson I.R."/>
            <person name="Sperandio V."/>
            <person name="Ravel J."/>
        </authorList>
    </citation>
    <scope>NUCLEOTIDE SEQUENCE [LARGE SCALE GENOMIC DNA]</scope>
    <source>
        <strain>HS</strain>
    </source>
</reference>
<protein>
    <recommendedName>
        <fullName evidence="1">Protein ApaG</fullName>
    </recommendedName>
</protein>
<proteinExistence type="inferred from homology"/>
<dbReference type="EMBL" id="CP000802">
    <property type="protein sequence ID" value="ABV04456.1"/>
    <property type="molecule type" value="Genomic_DNA"/>
</dbReference>
<dbReference type="RefSeq" id="WP_000610901.1">
    <property type="nucleotide sequence ID" value="NC_009800.1"/>
</dbReference>
<dbReference type="SMR" id="A7ZW02"/>
<dbReference type="GeneID" id="93777385"/>
<dbReference type="KEGG" id="ecx:EcHS_A0056"/>
<dbReference type="HOGENOM" id="CLU_128074_0_0_6"/>
<dbReference type="GO" id="GO:0070987">
    <property type="term" value="P:error-free translesion synthesis"/>
    <property type="evidence" value="ECO:0007669"/>
    <property type="project" value="TreeGrafter"/>
</dbReference>
<dbReference type="Gene3D" id="2.60.40.1470">
    <property type="entry name" value="ApaG domain"/>
    <property type="match status" value="1"/>
</dbReference>
<dbReference type="HAMAP" id="MF_00791">
    <property type="entry name" value="ApaG"/>
    <property type="match status" value="1"/>
</dbReference>
<dbReference type="InterPro" id="IPR007474">
    <property type="entry name" value="ApaG_domain"/>
</dbReference>
<dbReference type="InterPro" id="IPR036767">
    <property type="entry name" value="ApaG_sf"/>
</dbReference>
<dbReference type="InterPro" id="IPR023065">
    <property type="entry name" value="Uncharacterised_ApaG"/>
</dbReference>
<dbReference type="NCBIfam" id="NF003967">
    <property type="entry name" value="PRK05461.1"/>
    <property type="match status" value="1"/>
</dbReference>
<dbReference type="PANTHER" id="PTHR14289">
    <property type="entry name" value="F-BOX ONLY PROTEIN 3"/>
    <property type="match status" value="1"/>
</dbReference>
<dbReference type="PANTHER" id="PTHR14289:SF16">
    <property type="entry name" value="POLYMERASE DELTA-INTERACTING PROTEIN 2"/>
    <property type="match status" value="1"/>
</dbReference>
<dbReference type="Pfam" id="PF04379">
    <property type="entry name" value="DUF525"/>
    <property type="match status" value="1"/>
</dbReference>
<dbReference type="SUPFAM" id="SSF110069">
    <property type="entry name" value="ApaG-like"/>
    <property type="match status" value="1"/>
</dbReference>
<dbReference type="PROSITE" id="PS51087">
    <property type="entry name" value="APAG"/>
    <property type="match status" value="1"/>
</dbReference>
<name>APAG_ECOHS</name>
<feature type="chain" id="PRO_1000083617" description="Protein ApaG">
    <location>
        <begin position="1"/>
        <end position="125"/>
    </location>
</feature>
<feature type="domain" description="ApaG" evidence="1">
    <location>
        <begin position="1"/>
        <end position="125"/>
    </location>
</feature>
<evidence type="ECO:0000255" key="1">
    <source>
        <dbReference type="HAMAP-Rule" id="MF_00791"/>
    </source>
</evidence>
<gene>
    <name evidence="1" type="primary">apaG</name>
    <name type="ordered locus">EcHS_A0056</name>
</gene>
<organism>
    <name type="scientific">Escherichia coli O9:H4 (strain HS)</name>
    <dbReference type="NCBI Taxonomy" id="331112"/>
    <lineage>
        <taxon>Bacteria</taxon>
        <taxon>Pseudomonadati</taxon>
        <taxon>Pseudomonadota</taxon>
        <taxon>Gammaproteobacteria</taxon>
        <taxon>Enterobacterales</taxon>
        <taxon>Enterobacteriaceae</taxon>
        <taxon>Escherichia</taxon>
    </lineage>
</organism>
<accession>A7ZW02</accession>